<proteinExistence type="evidence at protein level"/>
<feature type="chain" id="PRO_0000363282" description="Protein phosphatase 2C 35">
    <location>
        <begin position="1"/>
        <end position="639"/>
    </location>
</feature>
<feature type="domain" description="PPM-type phosphatase" evidence="2">
    <location>
        <begin position="227"/>
        <end position="630"/>
    </location>
</feature>
<feature type="region of interest" description="Disordered" evidence="3">
    <location>
        <begin position="295"/>
        <end position="341"/>
    </location>
</feature>
<feature type="compositionally biased region" description="Polar residues" evidence="3">
    <location>
        <begin position="308"/>
        <end position="320"/>
    </location>
</feature>
<feature type="compositionally biased region" description="Basic residues" evidence="3">
    <location>
        <begin position="323"/>
        <end position="332"/>
    </location>
</feature>
<feature type="binding site" evidence="1">
    <location>
        <position position="262"/>
    </location>
    <ligand>
        <name>Mn(2+)</name>
        <dbReference type="ChEBI" id="CHEBI:29035"/>
        <label>1</label>
    </ligand>
</feature>
<feature type="binding site" evidence="1">
    <location>
        <position position="262"/>
    </location>
    <ligand>
        <name>Mn(2+)</name>
        <dbReference type="ChEBI" id="CHEBI:29035"/>
        <label>2</label>
    </ligand>
</feature>
<feature type="binding site" evidence="1">
    <location>
        <position position="263"/>
    </location>
    <ligand>
        <name>Mn(2+)</name>
        <dbReference type="ChEBI" id="CHEBI:29035"/>
        <label>1</label>
    </ligand>
</feature>
<feature type="binding site" evidence="1">
    <location>
        <position position="558"/>
    </location>
    <ligand>
        <name>Mn(2+)</name>
        <dbReference type="ChEBI" id="CHEBI:29035"/>
        <label>2</label>
    </ligand>
</feature>
<feature type="binding site" evidence="1">
    <location>
        <position position="621"/>
    </location>
    <ligand>
        <name>Mn(2+)</name>
        <dbReference type="ChEBI" id="CHEBI:29035"/>
        <label>2</label>
    </ligand>
</feature>
<feature type="sequence conflict" description="In Ref. 5; EAZ29092." evidence="5" ref="5">
    <original>GG</original>
    <variation>CC</variation>
    <location>
        <begin position="12"/>
        <end position="13"/>
    </location>
</feature>
<feature type="sequence conflict" description="In Ref. 6; AK071722." evidence="5" ref="6">
    <original>A</original>
    <variation>V</variation>
    <location>
        <position position="23"/>
    </location>
</feature>
<feature type="sequence conflict" description="In Ref. 6; AK071722." evidence="5" ref="6">
    <original>P</original>
    <variation>T</variation>
    <location>
        <position position="402"/>
    </location>
</feature>
<gene>
    <name type="primary">XB15</name>
    <name type="ordered locus">Os03g0821300</name>
    <name type="ordered locus">LOC_Os03g60650</name>
    <name type="ORF">OJ1754_E06.28</name>
    <name type="ORF">OsJ_012575</name>
</gene>
<accession>Q84T94</accession>
<accession>A0A0P0W4T8</accession>
<accession>A3AP53</accession>
<accession>Q70KS9</accession>
<reference key="1">
    <citation type="journal article" date="2005" name="Genome Res.">
        <title>Sequence, annotation, and analysis of synteny between rice chromosome 3 and diverged grass species.</title>
        <authorList>
            <consortium name="The rice chromosome 3 sequencing consortium"/>
            <person name="Buell C.R."/>
            <person name="Yuan Q."/>
            <person name="Ouyang S."/>
            <person name="Liu J."/>
            <person name="Zhu W."/>
            <person name="Wang A."/>
            <person name="Maiti R."/>
            <person name="Haas B."/>
            <person name="Wortman J."/>
            <person name="Pertea M."/>
            <person name="Jones K.M."/>
            <person name="Kim M."/>
            <person name="Overton L."/>
            <person name="Tsitrin T."/>
            <person name="Fadrosh D."/>
            <person name="Bera J."/>
            <person name="Weaver B."/>
            <person name="Jin S."/>
            <person name="Johri S."/>
            <person name="Reardon M."/>
            <person name="Webb K."/>
            <person name="Hill J."/>
            <person name="Moffat K."/>
            <person name="Tallon L."/>
            <person name="Van Aken S."/>
            <person name="Lewis M."/>
            <person name="Utterback T."/>
            <person name="Feldblyum T."/>
            <person name="Zismann V."/>
            <person name="Iobst S."/>
            <person name="Hsiao J."/>
            <person name="de Vazeille A.R."/>
            <person name="Salzberg S.L."/>
            <person name="White O."/>
            <person name="Fraser C.M."/>
            <person name="Yu Y."/>
            <person name="Kim H."/>
            <person name="Rambo T."/>
            <person name="Currie J."/>
            <person name="Collura K."/>
            <person name="Kernodle-Thompson S."/>
            <person name="Wei F."/>
            <person name="Kudrna K."/>
            <person name="Ammiraju J.S.S."/>
            <person name="Luo M."/>
            <person name="Goicoechea J.L."/>
            <person name="Wing R.A."/>
            <person name="Henry D."/>
            <person name="Oates R."/>
            <person name="Palmer M."/>
            <person name="Pries G."/>
            <person name="Saski C."/>
            <person name="Simmons J."/>
            <person name="Soderlund C."/>
            <person name="Nelson W."/>
            <person name="de la Bastide M."/>
            <person name="Spiegel L."/>
            <person name="Nascimento L."/>
            <person name="Huang E."/>
            <person name="Preston R."/>
            <person name="Zutavern T."/>
            <person name="Palmer L."/>
            <person name="O'Shaughnessy A."/>
            <person name="Dike S."/>
            <person name="McCombie W.R."/>
            <person name="Minx P."/>
            <person name="Cordum H."/>
            <person name="Wilson R."/>
            <person name="Jin W."/>
            <person name="Lee H.R."/>
            <person name="Jiang J."/>
            <person name="Jackson S."/>
        </authorList>
    </citation>
    <scope>NUCLEOTIDE SEQUENCE [LARGE SCALE GENOMIC DNA]</scope>
    <source>
        <strain>cv. Nipponbare</strain>
    </source>
</reference>
<reference key="2">
    <citation type="journal article" date="2005" name="Nature">
        <title>The map-based sequence of the rice genome.</title>
        <authorList>
            <consortium name="International rice genome sequencing project (IRGSP)"/>
        </authorList>
    </citation>
    <scope>NUCLEOTIDE SEQUENCE [LARGE SCALE GENOMIC DNA]</scope>
    <source>
        <strain>cv. Nipponbare</strain>
    </source>
</reference>
<reference key="3">
    <citation type="journal article" date="2008" name="Nucleic Acids Res.">
        <title>The rice annotation project database (RAP-DB): 2008 update.</title>
        <authorList>
            <consortium name="The rice annotation project (RAP)"/>
        </authorList>
    </citation>
    <scope>GENOME REANNOTATION</scope>
    <source>
        <strain>cv. Nipponbare</strain>
    </source>
</reference>
<reference key="4">
    <citation type="journal article" date="2013" name="Rice">
        <title>Improvement of the Oryza sativa Nipponbare reference genome using next generation sequence and optical map data.</title>
        <authorList>
            <person name="Kawahara Y."/>
            <person name="de la Bastide M."/>
            <person name="Hamilton J.P."/>
            <person name="Kanamori H."/>
            <person name="McCombie W.R."/>
            <person name="Ouyang S."/>
            <person name="Schwartz D.C."/>
            <person name="Tanaka T."/>
            <person name="Wu J."/>
            <person name="Zhou S."/>
            <person name="Childs K.L."/>
            <person name="Davidson R.M."/>
            <person name="Lin H."/>
            <person name="Quesada-Ocampo L."/>
            <person name="Vaillancourt B."/>
            <person name="Sakai H."/>
            <person name="Lee S.S."/>
            <person name="Kim J."/>
            <person name="Numa H."/>
            <person name="Itoh T."/>
            <person name="Buell C.R."/>
            <person name="Matsumoto T."/>
        </authorList>
    </citation>
    <scope>GENOME REANNOTATION</scope>
    <source>
        <strain>cv. Nipponbare</strain>
    </source>
</reference>
<reference key="5">
    <citation type="journal article" date="2005" name="PLoS Biol.">
        <title>The genomes of Oryza sativa: a history of duplications.</title>
        <authorList>
            <person name="Yu J."/>
            <person name="Wang J."/>
            <person name="Lin W."/>
            <person name="Li S."/>
            <person name="Li H."/>
            <person name="Zhou J."/>
            <person name="Ni P."/>
            <person name="Dong W."/>
            <person name="Hu S."/>
            <person name="Zeng C."/>
            <person name="Zhang J."/>
            <person name="Zhang Y."/>
            <person name="Li R."/>
            <person name="Xu Z."/>
            <person name="Li S."/>
            <person name="Li X."/>
            <person name="Zheng H."/>
            <person name="Cong L."/>
            <person name="Lin L."/>
            <person name="Yin J."/>
            <person name="Geng J."/>
            <person name="Li G."/>
            <person name="Shi J."/>
            <person name="Liu J."/>
            <person name="Lv H."/>
            <person name="Li J."/>
            <person name="Wang J."/>
            <person name="Deng Y."/>
            <person name="Ran L."/>
            <person name="Shi X."/>
            <person name="Wang X."/>
            <person name="Wu Q."/>
            <person name="Li C."/>
            <person name="Ren X."/>
            <person name="Wang J."/>
            <person name="Wang X."/>
            <person name="Li D."/>
            <person name="Liu D."/>
            <person name="Zhang X."/>
            <person name="Ji Z."/>
            <person name="Zhao W."/>
            <person name="Sun Y."/>
            <person name="Zhang Z."/>
            <person name="Bao J."/>
            <person name="Han Y."/>
            <person name="Dong L."/>
            <person name="Ji J."/>
            <person name="Chen P."/>
            <person name="Wu S."/>
            <person name="Liu J."/>
            <person name="Xiao Y."/>
            <person name="Bu D."/>
            <person name="Tan J."/>
            <person name="Yang L."/>
            <person name="Ye C."/>
            <person name="Zhang J."/>
            <person name="Xu J."/>
            <person name="Zhou Y."/>
            <person name="Yu Y."/>
            <person name="Zhang B."/>
            <person name="Zhuang S."/>
            <person name="Wei H."/>
            <person name="Liu B."/>
            <person name="Lei M."/>
            <person name="Yu H."/>
            <person name="Li Y."/>
            <person name="Xu H."/>
            <person name="Wei S."/>
            <person name="He X."/>
            <person name="Fang L."/>
            <person name="Zhang Z."/>
            <person name="Zhang Y."/>
            <person name="Huang X."/>
            <person name="Su Z."/>
            <person name="Tong W."/>
            <person name="Li J."/>
            <person name="Tong Z."/>
            <person name="Li S."/>
            <person name="Ye J."/>
            <person name="Wang L."/>
            <person name="Fang L."/>
            <person name="Lei T."/>
            <person name="Chen C.-S."/>
            <person name="Chen H.-C."/>
            <person name="Xu Z."/>
            <person name="Li H."/>
            <person name="Huang H."/>
            <person name="Zhang F."/>
            <person name="Xu H."/>
            <person name="Li N."/>
            <person name="Zhao C."/>
            <person name="Li S."/>
            <person name="Dong L."/>
            <person name="Huang Y."/>
            <person name="Li L."/>
            <person name="Xi Y."/>
            <person name="Qi Q."/>
            <person name="Li W."/>
            <person name="Zhang B."/>
            <person name="Hu W."/>
            <person name="Zhang Y."/>
            <person name="Tian X."/>
            <person name="Jiao Y."/>
            <person name="Liang X."/>
            <person name="Jin J."/>
            <person name="Gao L."/>
            <person name="Zheng W."/>
            <person name="Hao B."/>
            <person name="Liu S.-M."/>
            <person name="Wang W."/>
            <person name="Yuan L."/>
            <person name="Cao M."/>
            <person name="McDermott J."/>
            <person name="Samudrala R."/>
            <person name="Wang J."/>
            <person name="Wong G.K.-S."/>
            <person name="Yang H."/>
        </authorList>
    </citation>
    <scope>NUCLEOTIDE SEQUENCE [LARGE SCALE GENOMIC DNA]</scope>
    <source>
        <strain>cv. Nipponbare</strain>
    </source>
</reference>
<reference key="6">
    <citation type="journal article" date="2003" name="Science">
        <title>Collection, mapping, and annotation of over 28,000 cDNA clones from japonica rice.</title>
        <authorList>
            <consortium name="The rice full-length cDNA consortium"/>
        </authorList>
    </citation>
    <scope>NUCLEOTIDE SEQUENCE [LARGE SCALE MRNA]</scope>
    <source>
        <strain>cv. Nipponbare</strain>
    </source>
</reference>
<reference key="7">
    <citation type="journal article" date="2004" name="Plant J.">
        <title>Development of an efficient method for the isolation of factors involved in gene transcription during rice embryo development.</title>
        <authorList>
            <person name="Ye R."/>
            <person name="Yao Q.-H."/>
            <person name="Xu Z.-H."/>
            <person name="Xue H.-W."/>
        </authorList>
    </citation>
    <scope>NUCLEOTIDE SEQUENCE [MRNA] OF 486-639</scope>
    <source>
        <tissue>Embryo</tissue>
    </source>
</reference>
<reference key="8">
    <citation type="journal article" date="2008" name="BMC Genomics">
        <title>Genome-wide and expression analysis of protein phosphatase 2C in rice and Arabidopsis.</title>
        <authorList>
            <person name="Xue T."/>
            <person name="Wang D."/>
            <person name="Zhang S."/>
            <person name="Ehlting J."/>
            <person name="Ni F."/>
            <person name="Jacab S."/>
            <person name="Zheng C."/>
            <person name="Zhong Y."/>
        </authorList>
    </citation>
    <scope>GENE FAMILY</scope>
    <scope>NOMENCLATURE</scope>
</reference>
<reference key="9">
    <citation type="journal article" date="2008" name="PLoS Biol.">
        <title>Rice XB15, a protein phosphatase 2C, negatively regulates cell death and XA21-mediated innate immunity.</title>
        <authorList>
            <person name="Park C.-J."/>
            <person name="Peng Y."/>
            <person name="Chen X."/>
            <person name="Dardick C."/>
            <person name="Ruan D."/>
            <person name="Bart R."/>
            <person name="Canlas P.E."/>
            <person name="Ronald P.C."/>
        </authorList>
    </citation>
    <scope>FUNCTION</scope>
    <scope>SUBCELLULAR LOCATION</scope>
    <scope>DISRUPTION PHENOTYPE</scope>
    <scope>INTERACTION WITH XA21</scope>
</reference>
<protein>
    <recommendedName>
        <fullName>Protein phosphatase 2C 35</fullName>
        <shortName>OsPP2C35</shortName>
        <ecNumber>3.1.3.16</ecNumber>
    </recommendedName>
    <alternativeName>
        <fullName>XA21-binding protein 15</fullName>
    </alternativeName>
</protein>
<keyword id="KW-1003">Cell membrane</keyword>
<keyword id="KW-0378">Hydrolase</keyword>
<keyword id="KW-0460">Magnesium</keyword>
<keyword id="KW-0464">Manganese</keyword>
<keyword id="KW-0472">Membrane</keyword>
<keyword id="KW-0479">Metal-binding</keyword>
<keyword id="KW-0611">Plant defense</keyword>
<keyword id="KW-0904">Protein phosphatase</keyword>
<keyword id="KW-1185">Reference proteome</keyword>
<dbReference type="EC" id="3.1.3.16"/>
<dbReference type="EMBL" id="AC104433">
    <property type="protein sequence ID" value="AAO65883.1"/>
    <property type="molecule type" value="Genomic_DNA"/>
</dbReference>
<dbReference type="EMBL" id="DP000009">
    <property type="protein sequence ID" value="ABF99594.1"/>
    <property type="molecule type" value="Genomic_DNA"/>
</dbReference>
<dbReference type="EMBL" id="AP008209">
    <property type="protein sequence ID" value="BAF13640.1"/>
    <property type="molecule type" value="Genomic_DNA"/>
</dbReference>
<dbReference type="EMBL" id="AP014959">
    <property type="protein sequence ID" value="BAS87094.1"/>
    <property type="molecule type" value="Genomic_DNA"/>
</dbReference>
<dbReference type="EMBL" id="CM000140">
    <property type="protein sequence ID" value="EAZ29092.1"/>
    <property type="molecule type" value="Genomic_DNA"/>
</dbReference>
<dbReference type="EMBL" id="AK071722">
    <property type="status" value="NOT_ANNOTATED_CDS"/>
    <property type="molecule type" value="mRNA"/>
</dbReference>
<dbReference type="EMBL" id="AJ575237">
    <property type="protein sequence ID" value="CAE00873.1"/>
    <property type="molecule type" value="mRNA"/>
</dbReference>
<dbReference type="RefSeq" id="XP_015632569.1">
    <property type="nucleotide sequence ID" value="XM_015777083.1"/>
</dbReference>
<dbReference type="SMR" id="Q84T94"/>
<dbReference type="DIP" id="DIP-46055N"/>
<dbReference type="FunCoup" id="Q84T94">
    <property type="interactions" value="505"/>
</dbReference>
<dbReference type="IntAct" id="Q84T94">
    <property type="interactions" value="1"/>
</dbReference>
<dbReference type="STRING" id="39947.Q84T94"/>
<dbReference type="PaxDb" id="39947-Q84T94"/>
<dbReference type="EnsemblPlants" id="Os03t0821300-01">
    <property type="protein sequence ID" value="Os03t0821300-01"/>
    <property type="gene ID" value="Os03g0821300"/>
</dbReference>
<dbReference type="Gramene" id="Os03t0821300-01">
    <property type="protein sequence ID" value="Os03t0821300-01"/>
    <property type="gene ID" value="Os03g0821300"/>
</dbReference>
<dbReference type="KEGG" id="dosa:Os03g0821300"/>
<dbReference type="eggNOG" id="KOG0700">
    <property type="taxonomic scope" value="Eukaryota"/>
</dbReference>
<dbReference type="HOGENOM" id="CLU_013173_12_1_1"/>
<dbReference type="InParanoid" id="Q84T94"/>
<dbReference type="OMA" id="LLWHQCE"/>
<dbReference type="OrthoDB" id="420076at2759"/>
<dbReference type="Proteomes" id="UP000000763">
    <property type="component" value="Chromosome 3"/>
</dbReference>
<dbReference type="Proteomes" id="UP000007752">
    <property type="component" value="Chromosome 3"/>
</dbReference>
<dbReference type="Proteomes" id="UP000059680">
    <property type="component" value="Chromosome 3"/>
</dbReference>
<dbReference type="ExpressionAtlas" id="Q84T94">
    <property type="expression patterns" value="baseline and differential"/>
</dbReference>
<dbReference type="GO" id="GO:0005886">
    <property type="term" value="C:plasma membrane"/>
    <property type="evidence" value="ECO:0007669"/>
    <property type="project" value="UniProtKB-SubCell"/>
</dbReference>
<dbReference type="GO" id="GO:0046872">
    <property type="term" value="F:metal ion binding"/>
    <property type="evidence" value="ECO:0007669"/>
    <property type="project" value="UniProtKB-KW"/>
</dbReference>
<dbReference type="GO" id="GO:0004722">
    <property type="term" value="F:protein serine/threonine phosphatase activity"/>
    <property type="evidence" value="ECO:0007669"/>
    <property type="project" value="UniProtKB-EC"/>
</dbReference>
<dbReference type="GO" id="GO:0006952">
    <property type="term" value="P:defense response"/>
    <property type="evidence" value="ECO:0007669"/>
    <property type="project" value="UniProtKB-KW"/>
</dbReference>
<dbReference type="GO" id="GO:0007165">
    <property type="term" value="P:signal transduction"/>
    <property type="evidence" value="ECO:0000318"/>
    <property type="project" value="GO_Central"/>
</dbReference>
<dbReference type="CDD" id="cd00143">
    <property type="entry name" value="PP2Cc"/>
    <property type="match status" value="1"/>
</dbReference>
<dbReference type="FunFam" id="3.60.40.10:FF:000050">
    <property type="entry name" value="probable protein phosphatase 2C 4"/>
    <property type="match status" value="1"/>
</dbReference>
<dbReference type="Gene3D" id="3.60.40.10">
    <property type="entry name" value="PPM-type phosphatase domain"/>
    <property type="match status" value="1"/>
</dbReference>
<dbReference type="InterPro" id="IPR015655">
    <property type="entry name" value="PP2C"/>
</dbReference>
<dbReference type="InterPro" id="IPR036457">
    <property type="entry name" value="PPM-type-like_dom_sf"/>
</dbReference>
<dbReference type="InterPro" id="IPR001932">
    <property type="entry name" value="PPM-type_phosphatase-like_dom"/>
</dbReference>
<dbReference type="PANTHER" id="PTHR13832">
    <property type="entry name" value="PROTEIN PHOSPHATASE 2C"/>
    <property type="match status" value="1"/>
</dbReference>
<dbReference type="PANTHER" id="PTHR13832:SF228">
    <property type="entry name" value="PROTEIN PHOSPHATASE 2C 23-RELATED"/>
    <property type="match status" value="1"/>
</dbReference>
<dbReference type="Pfam" id="PF00481">
    <property type="entry name" value="PP2C"/>
    <property type="match status" value="1"/>
</dbReference>
<dbReference type="SMART" id="SM00332">
    <property type="entry name" value="PP2Cc"/>
    <property type="match status" value="1"/>
</dbReference>
<dbReference type="SUPFAM" id="SSF81606">
    <property type="entry name" value="PP2C-like"/>
    <property type="match status" value="1"/>
</dbReference>
<dbReference type="PROSITE" id="PS51746">
    <property type="entry name" value="PPM_2"/>
    <property type="match status" value="1"/>
</dbReference>
<organism>
    <name type="scientific">Oryza sativa subsp. japonica</name>
    <name type="common">Rice</name>
    <dbReference type="NCBI Taxonomy" id="39947"/>
    <lineage>
        <taxon>Eukaryota</taxon>
        <taxon>Viridiplantae</taxon>
        <taxon>Streptophyta</taxon>
        <taxon>Embryophyta</taxon>
        <taxon>Tracheophyta</taxon>
        <taxon>Spermatophyta</taxon>
        <taxon>Magnoliopsida</taxon>
        <taxon>Liliopsida</taxon>
        <taxon>Poales</taxon>
        <taxon>Poaceae</taxon>
        <taxon>BOP clade</taxon>
        <taxon>Oryzoideae</taxon>
        <taxon>Oryzeae</taxon>
        <taxon>Oryzinae</taxon>
        <taxon>Oryza</taxon>
        <taxon>Oryza sativa</taxon>
    </lineage>
</organism>
<sequence length="639" mass="69180">MGNSLACFCCGGGAGGRGGRHVAPAALPSDPAYDEGLGHSFCYVRPDKFVVPFSADDLVADAKAAAAAEGEATTFRAISGAALSANVSTPLSTSVLLLMPEESSASATASSGFESSESFAAVPLQPVPRFSSGPISAPFSGGFMSGPLERGFQSGPLDAALLSGPLPGTATSGRMGGAVPALRRSLSHGGRRLRNFTRALLARTEKFQDSADLGSPDAAAAAVAACGGDPCGLQWAQGKAGEDRVHVVVSEERGWVFVGIYDGFNGPDATDFLVSNLYAAVHRELRGLLWDQREQNVQHDQRPDQPGSAPSTTASDNQDQWGRRRRTRRSRPPRGADDDQRRWKCEWEQERDCSNLKPPTQQRLRCNSENDHVAVLKALTRALHRTEEAYLDIADKMVGEFPELALMGSCVLAMLMKGEDMYIMNVGDSRAVLATMDSVDLEQISQGSFDGSVGDCPPCLSAVQLTSDHSTSVEEEVIRIRNEHPDDPSAISKDRVKGSLKVTRAFGAGFLKQPKWNDALLEMFRIDYVGSSPYISCNPSLFHHKLSTRDRFLILSSDGLYQYFTNEEAVAQVEMFIATTPEGDPAQHLVEEVLFRAANKAGMDFHELIEIPHGDRRRYHDDVSVIVISLEGRIWRSCV</sequence>
<name>P2C35_ORYSJ</name>
<comment type="function">
    <text evidence="4">Protein phosphatase that acts on XA21 pathogen recognition receptor. Negatively regulates cell death and XA21-mediated innate immunity.</text>
</comment>
<comment type="catalytic activity">
    <reaction>
        <text>O-phospho-L-seryl-[protein] + H2O = L-seryl-[protein] + phosphate</text>
        <dbReference type="Rhea" id="RHEA:20629"/>
        <dbReference type="Rhea" id="RHEA-COMP:9863"/>
        <dbReference type="Rhea" id="RHEA-COMP:11604"/>
        <dbReference type="ChEBI" id="CHEBI:15377"/>
        <dbReference type="ChEBI" id="CHEBI:29999"/>
        <dbReference type="ChEBI" id="CHEBI:43474"/>
        <dbReference type="ChEBI" id="CHEBI:83421"/>
        <dbReference type="EC" id="3.1.3.16"/>
    </reaction>
</comment>
<comment type="catalytic activity">
    <reaction>
        <text>O-phospho-L-threonyl-[protein] + H2O = L-threonyl-[protein] + phosphate</text>
        <dbReference type="Rhea" id="RHEA:47004"/>
        <dbReference type="Rhea" id="RHEA-COMP:11060"/>
        <dbReference type="Rhea" id="RHEA-COMP:11605"/>
        <dbReference type="ChEBI" id="CHEBI:15377"/>
        <dbReference type="ChEBI" id="CHEBI:30013"/>
        <dbReference type="ChEBI" id="CHEBI:43474"/>
        <dbReference type="ChEBI" id="CHEBI:61977"/>
        <dbReference type="EC" id="3.1.3.16"/>
    </reaction>
</comment>
<comment type="cofactor">
    <cofactor evidence="1">
        <name>Mg(2+)</name>
        <dbReference type="ChEBI" id="CHEBI:18420"/>
    </cofactor>
    <cofactor evidence="1">
        <name>Mn(2+)</name>
        <dbReference type="ChEBI" id="CHEBI:29035"/>
    </cofactor>
    <text evidence="1">Binds 2 magnesium or manganese ions per subunit.</text>
</comment>
<comment type="subunit">
    <text evidence="4">Interacts with XA21 (via juxtamembrane and kinase domains).</text>
</comment>
<comment type="interaction">
    <interactant intactId="EBI-15730564">
        <id>Q84T94</id>
    </interactant>
    <interactant intactId="EBI-15730546">
        <id>Q40640</id>
        <label>Xa21</label>
    </interactant>
    <organismsDiffer>true</organismsDiffer>
    <experiments>4</experiments>
</comment>
<comment type="subcellular location">
    <subcellularLocation>
        <location evidence="4">Cell membrane</location>
        <topology evidence="4">Peripheral membrane protein</topology>
        <orientation evidence="4">Cytoplasmic side</orientation>
    </subcellularLocation>
    <text>Associated with XA21 receptor kinase.</text>
</comment>
<comment type="disruption phenotype">
    <text evidence="4">Enhanced resistance to Xanthomonas oryzae pv. oryzae (Xoo), expression of defense-related genes and cell death (necrotic lesions).</text>
</comment>
<comment type="similarity">
    <text evidence="5">Belongs to the PP2C family.</text>
</comment>
<evidence type="ECO:0000250" key="1"/>
<evidence type="ECO:0000255" key="2">
    <source>
        <dbReference type="PROSITE-ProRule" id="PRU01082"/>
    </source>
</evidence>
<evidence type="ECO:0000256" key="3">
    <source>
        <dbReference type="SAM" id="MobiDB-lite"/>
    </source>
</evidence>
<evidence type="ECO:0000269" key="4">
    <source>
    </source>
</evidence>
<evidence type="ECO:0000305" key="5"/>